<evidence type="ECO:0000255" key="1">
    <source>
        <dbReference type="HAMAP-Rule" id="MF_01365"/>
    </source>
</evidence>
<evidence type="ECO:0000305" key="2"/>
<name>RL6_CLOK1</name>
<keyword id="KW-0687">Ribonucleoprotein</keyword>
<keyword id="KW-0689">Ribosomal protein</keyword>
<keyword id="KW-0694">RNA-binding</keyword>
<keyword id="KW-0699">rRNA-binding</keyword>
<proteinExistence type="inferred from homology"/>
<feature type="chain" id="PRO_1000166801" description="Large ribosomal subunit protein uL6">
    <location>
        <begin position="1"/>
        <end position="180"/>
    </location>
</feature>
<comment type="function">
    <text evidence="1">This protein binds to the 23S rRNA, and is important in its secondary structure. It is located near the subunit interface in the base of the L7/L12 stalk, and near the tRNA binding site of the peptidyltransferase center.</text>
</comment>
<comment type="subunit">
    <text evidence="1">Part of the 50S ribosomal subunit.</text>
</comment>
<comment type="similarity">
    <text evidence="1">Belongs to the universal ribosomal protein uL6 family.</text>
</comment>
<reference key="1">
    <citation type="submission" date="2005-09" db="EMBL/GenBank/DDBJ databases">
        <title>Complete genome sequence of Clostridium kluyveri and comparative genomics of Clostridia species.</title>
        <authorList>
            <person name="Inui M."/>
            <person name="Nonaka H."/>
            <person name="Shinoda Y."/>
            <person name="Ikenaga Y."/>
            <person name="Abe M."/>
            <person name="Naito K."/>
            <person name="Vertes A.A."/>
            <person name="Yukawa H."/>
        </authorList>
    </citation>
    <scope>NUCLEOTIDE SEQUENCE [LARGE SCALE GENOMIC DNA]</scope>
    <source>
        <strain>NBRC 12016</strain>
    </source>
</reference>
<sequence>MSRIGKLPIAIPAGVTFTVTPDNVVTVKGSKGQLVKAMAKDINIAVEDNSVVVTRNDDEKKSRSLHGLTRALINNMVVGVTEGYSKTLELIGVGYRAQLQGKKLVMNLGFSHPVEIEAVEGVTFETPAATKVVIKGIDKELVGNVAADIRSWRKPEPYKGKGIKYDNEVIRRKEGKTGKK</sequence>
<accession>B9DYC4</accession>
<protein>
    <recommendedName>
        <fullName evidence="1">Large ribosomal subunit protein uL6</fullName>
    </recommendedName>
    <alternativeName>
        <fullName evidence="2">50S ribosomal protein L6</fullName>
    </alternativeName>
</protein>
<organism>
    <name type="scientific">Clostridium kluyveri (strain NBRC 12016)</name>
    <dbReference type="NCBI Taxonomy" id="583346"/>
    <lineage>
        <taxon>Bacteria</taxon>
        <taxon>Bacillati</taxon>
        <taxon>Bacillota</taxon>
        <taxon>Clostridia</taxon>
        <taxon>Eubacteriales</taxon>
        <taxon>Clostridiaceae</taxon>
        <taxon>Clostridium</taxon>
    </lineage>
</organism>
<dbReference type="EMBL" id="AP009049">
    <property type="protein sequence ID" value="BAH05249.1"/>
    <property type="molecule type" value="Genomic_DNA"/>
</dbReference>
<dbReference type="RefSeq" id="WP_011988818.1">
    <property type="nucleotide sequence ID" value="NC_011837.1"/>
</dbReference>
<dbReference type="SMR" id="B9DYC4"/>
<dbReference type="KEGG" id="ckr:CKR_0198"/>
<dbReference type="HOGENOM" id="CLU_065464_1_2_9"/>
<dbReference type="Proteomes" id="UP000007969">
    <property type="component" value="Chromosome"/>
</dbReference>
<dbReference type="GO" id="GO:0022625">
    <property type="term" value="C:cytosolic large ribosomal subunit"/>
    <property type="evidence" value="ECO:0007669"/>
    <property type="project" value="TreeGrafter"/>
</dbReference>
<dbReference type="GO" id="GO:0019843">
    <property type="term" value="F:rRNA binding"/>
    <property type="evidence" value="ECO:0007669"/>
    <property type="project" value="UniProtKB-UniRule"/>
</dbReference>
<dbReference type="GO" id="GO:0003735">
    <property type="term" value="F:structural constituent of ribosome"/>
    <property type="evidence" value="ECO:0007669"/>
    <property type="project" value="InterPro"/>
</dbReference>
<dbReference type="GO" id="GO:0002181">
    <property type="term" value="P:cytoplasmic translation"/>
    <property type="evidence" value="ECO:0007669"/>
    <property type="project" value="TreeGrafter"/>
</dbReference>
<dbReference type="FunFam" id="3.90.930.12:FF:000001">
    <property type="entry name" value="50S ribosomal protein L6"/>
    <property type="match status" value="1"/>
</dbReference>
<dbReference type="FunFam" id="3.90.930.12:FF:000002">
    <property type="entry name" value="50S ribosomal protein L6"/>
    <property type="match status" value="1"/>
</dbReference>
<dbReference type="Gene3D" id="3.90.930.12">
    <property type="entry name" value="Ribosomal protein L6, alpha-beta domain"/>
    <property type="match status" value="2"/>
</dbReference>
<dbReference type="HAMAP" id="MF_01365_B">
    <property type="entry name" value="Ribosomal_uL6_B"/>
    <property type="match status" value="1"/>
</dbReference>
<dbReference type="InterPro" id="IPR000702">
    <property type="entry name" value="Ribosomal_uL6-like"/>
</dbReference>
<dbReference type="InterPro" id="IPR036789">
    <property type="entry name" value="Ribosomal_uL6-like_a/b-dom_sf"/>
</dbReference>
<dbReference type="InterPro" id="IPR020040">
    <property type="entry name" value="Ribosomal_uL6_a/b-dom"/>
</dbReference>
<dbReference type="InterPro" id="IPR019906">
    <property type="entry name" value="Ribosomal_uL6_bac-type"/>
</dbReference>
<dbReference type="InterPro" id="IPR002358">
    <property type="entry name" value="Ribosomal_uL6_CS"/>
</dbReference>
<dbReference type="NCBIfam" id="TIGR03654">
    <property type="entry name" value="L6_bact"/>
    <property type="match status" value="1"/>
</dbReference>
<dbReference type="PANTHER" id="PTHR11655">
    <property type="entry name" value="60S/50S RIBOSOMAL PROTEIN L6/L9"/>
    <property type="match status" value="1"/>
</dbReference>
<dbReference type="PANTHER" id="PTHR11655:SF14">
    <property type="entry name" value="LARGE RIBOSOMAL SUBUNIT PROTEIN UL6M"/>
    <property type="match status" value="1"/>
</dbReference>
<dbReference type="Pfam" id="PF00347">
    <property type="entry name" value="Ribosomal_L6"/>
    <property type="match status" value="2"/>
</dbReference>
<dbReference type="PIRSF" id="PIRSF002162">
    <property type="entry name" value="Ribosomal_L6"/>
    <property type="match status" value="1"/>
</dbReference>
<dbReference type="PRINTS" id="PR00059">
    <property type="entry name" value="RIBOSOMALL6"/>
</dbReference>
<dbReference type="SUPFAM" id="SSF56053">
    <property type="entry name" value="Ribosomal protein L6"/>
    <property type="match status" value="2"/>
</dbReference>
<dbReference type="PROSITE" id="PS00525">
    <property type="entry name" value="RIBOSOMAL_L6_1"/>
    <property type="match status" value="1"/>
</dbReference>
<gene>
    <name evidence="1" type="primary">rplF</name>
    <name type="ordered locus">CKR_0198</name>
</gene>